<keyword id="KW-0028">Amino-acid biosynthesis</keyword>
<keyword id="KW-0057">Aromatic amino acid biosynthesis</keyword>
<keyword id="KW-0520">NAD</keyword>
<keyword id="KW-0560">Oxidoreductase</keyword>
<keyword id="KW-0827">Tyrosine biosynthesis</keyword>
<dbReference type="EC" id="1.3.1.12"/>
<dbReference type="EMBL" id="BA000017">
    <property type="protein sequence ID" value="BAB57527.1"/>
    <property type="molecule type" value="Genomic_DNA"/>
</dbReference>
<dbReference type="RefSeq" id="WP_000214278.1">
    <property type="nucleotide sequence ID" value="NC_002758.2"/>
</dbReference>
<dbReference type="SMR" id="Q99UB6"/>
<dbReference type="KEGG" id="sav:SAV1365"/>
<dbReference type="HOGENOM" id="CLU_055968_2_1_9"/>
<dbReference type="PhylomeDB" id="Q99UB6"/>
<dbReference type="UniPathway" id="UPA00122">
    <property type="reaction ID" value="UER00961"/>
</dbReference>
<dbReference type="Proteomes" id="UP000002481">
    <property type="component" value="Chromosome"/>
</dbReference>
<dbReference type="GO" id="GO:0070403">
    <property type="term" value="F:NAD+ binding"/>
    <property type="evidence" value="ECO:0007669"/>
    <property type="project" value="InterPro"/>
</dbReference>
<dbReference type="GO" id="GO:0008977">
    <property type="term" value="F:prephenate dehydrogenase (NAD+) activity"/>
    <property type="evidence" value="ECO:0007669"/>
    <property type="project" value="UniProtKB-EC"/>
</dbReference>
<dbReference type="GO" id="GO:0004665">
    <property type="term" value="F:prephenate dehydrogenase (NADP+) activity"/>
    <property type="evidence" value="ECO:0007669"/>
    <property type="project" value="InterPro"/>
</dbReference>
<dbReference type="GO" id="GO:0006571">
    <property type="term" value="P:tyrosine biosynthetic process"/>
    <property type="evidence" value="ECO:0007669"/>
    <property type="project" value="UniProtKB-UniPathway"/>
</dbReference>
<dbReference type="CDD" id="cd04909">
    <property type="entry name" value="ACT_PDH-BS"/>
    <property type="match status" value="1"/>
</dbReference>
<dbReference type="FunFam" id="1.10.3660.10:FF:000003">
    <property type="entry name" value="Prephenate dehydrogenase"/>
    <property type="match status" value="1"/>
</dbReference>
<dbReference type="FunFam" id="3.40.50.720:FF:000208">
    <property type="entry name" value="Prephenate dehydrogenase"/>
    <property type="match status" value="1"/>
</dbReference>
<dbReference type="Gene3D" id="1.10.3660.10">
    <property type="entry name" value="6-phosphogluconate dehydrogenase C-terminal like domain"/>
    <property type="match status" value="1"/>
</dbReference>
<dbReference type="Gene3D" id="3.40.50.720">
    <property type="entry name" value="NAD(P)-binding Rossmann-like Domain"/>
    <property type="match status" value="1"/>
</dbReference>
<dbReference type="InterPro" id="IPR008927">
    <property type="entry name" value="6-PGluconate_DH-like_C_sf"/>
</dbReference>
<dbReference type="InterPro" id="IPR045865">
    <property type="entry name" value="ACT-like_dom_sf"/>
</dbReference>
<dbReference type="InterPro" id="IPR002912">
    <property type="entry name" value="ACT_dom"/>
</dbReference>
<dbReference type="InterPro" id="IPR036291">
    <property type="entry name" value="NAD(P)-bd_dom_sf"/>
</dbReference>
<dbReference type="InterPro" id="IPR046825">
    <property type="entry name" value="PDH_C"/>
</dbReference>
<dbReference type="InterPro" id="IPR046826">
    <property type="entry name" value="PDH_N"/>
</dbReference>
<dbReference type="InterPro" id="IPR050812">
    <property type="entry name" value="Preph/Arog_dehydrog"/>
</dbReference>
<dbReference type="InterPro" id="IPR003099">
    <property type="entry name" value="Prephen_DH"/>
</dbReference>
<dbReference type="NCBIfam" id="NF005106">
    <property type="entry name" value="PRK06545.1-4"/>
    <property type="match status" value="1"/>
</dbReference>
<dbReference type="NCBIfam" id="NF005107">
    <property type="entry name" value="PRK06545.1-5"/>
    <property type="match status" value="1"/>
</dbReference>
<dbReference type="PANTHER" id="PTHR21363">
    <property type="entry name" value="PREPHENATE DEHYDROGENASE"/>
    <property type="match status" value="1"/>
</dbReference>
<dbReference type="PANTHER" id="PTHR21363:SF0">
    <property type="entry name" value="PREPHENATE DEHYDROGENASE [NADP(+)]"/>
    <property type="match status" value="1"/>
</dbReference>
<dbReference type="Pfam" id="PF20463">
    <property type="entry name" value="PDH_C"/>
    <property type="match status" value="1"/>
</dbReference>
<dbReference type="Pfam" id="PF02153">
    <property type="entry name" value="PDH_N"/>
    <property type="match status" value="1"/>
</dbReference>
<dbReference type="SUPFAM" id="SSF48179">
    <property type="entry name" value="6-phosphogluconate dehydrogenase C-terminal domain-like"/>
    <property type="match status" value="1"/>
</dbReference>
<dbReference type="SUPFAM" id="SSF55021">
    <property type="entry name" value="ACT-like"/>
    <property type="match status" value="1"/>
</dbReference>
<dbReference type="SUPFAM" id="SSF51735">
    <property type="entry name" value="NAD(P)-binding Rossmann-fold domains"/>
    <property type="match status" value="1"/>
</dbReference>
<dbReference type="PROSITE" id="PS51671">
    <property type="entry name" value="ACT"/>
    <property type="match status" value="1"/>
</dbReference>
<dbReference type="PROSITE" id="PS51176">
    <property type="entry name" value="PDH_ADH"/>
    <property type="match status" value="1"/>
</dbReference>
<feature type="chain" id="PRO_0000282658" description="Prephenate dehydrogenase">
    <location>
        <begin position="1"/>
        <end position="363"/>
    </location>
</feature>
<feature type="domain" description="Prephenate/arogenate dehydrogenase" evidence="2">
    <location>
        <begin position="2"/>
        <end position="291"/>
    </location>
</feature>
<feature type="domain" description="ACT" evidence="3">
    <location>
        <begin position="296"/>
        <end position="363"/>
    </location>
</feature>
<feature type="binding site" evidence="1">
    <location>
        <begin position="3"/>
        <end position="33"/>
    </location>
    <ligand>
        <name>NAD(+)</name>
        <dbReference type="ChEBI" id="CHEBI:57540"/>
    </ligand>
</feature>
<protein>
    <recommendedName>
        <fullName>Prephenate dehydrogenase</fullName>
        <shortName>PDH</shortName>
        <ecNumber>1.3.1.12</ecNumber>
    </recommendedName>
</protein>
<accession>Q99UB6</accession>
<evidence type="ECO:0000255" key="1"/>
<evidence type="ECO:0000255" key="2">
    <source>
        <dbReference type="PROSITE-ProRule" id="PRU00522"/>
    </source>
</evidence>
<evidence type="ECO:0000255" key="3">
    <source>
        <dbReference type="PROSITE-ProRule" id="PRU01007"/>
    </source>
</evidence>
<evidence type="ECO:0000305" key="4"/>
<comment type="catalytic activity">
    <reaction>
        <text>prephenate + NAD(+) = 3-(4-hydroxyphenyl)pyruvate + CO2 + NADH</text>
        <dbReference type="Rhea" id="RHEA:13869"/>
        <dbReference type="ChEBI" id="CHEBI:16526"/>
        <dbReference type="ChEBI" id="CHEBI:29934"/>
        <dbReference type="ChEBI" id="CHEBI:36242"/>
        <dbReference type="ChEBI" id="CHEBI:57540"/>
        <dbReference type="ChEBI" id="CHEBI:57945"/>
        <dbReference type="EC" id="1.3.1.12"/>
    </reaction>
</comment>
<comment type="pathway">
    <text>Amino-acid biosynthesis; L-tyrosine biosynthesis; (4-hydroxyphenyl)pyruvate from prephenate (NAD(+) route): step 1/1.</text>
</comment>
<comment type="similarity">
    <text evidence="4">Belongs to the prephenate/arogenate dehydrogenase family.</text>
</comment>
<gene>
    <name type="primary">tyrA</name>
    <name type="ordered locus">SAV1365</name>
</gene>
<organism>
    <name type="scientific">Staphylococcus aureus (strain Mu50 / ATCC 700699)</name>
    <dbReference type="NCBI Taxonomy" id="158878"/>
    <lineage>
        <taxon>Bacteria</taxon>
        <taxon>Bacillati</taxon>
        <taxon>Bacillota</taxon>
        <taxon>Bacilli</taxon>
        <taxon>Bacillales</taxon>
        <taxon>Staphylococcaceae</taxon>
        <taxon>Staphylococcus</taxon>
    </lineage>
</organism>
<proteinExistence type="inferred from homology"/>
<reference key="1">
    <citation type="journal article" date="2001" name="Lancet">
        <title>Whole genome sequencing of meticillin-resistant Staphylococcus aureus.</title>
        <authorList>
            <person name="Kuroda M."/>
            <person name="Ohta T."/>
            <person name="Uchiyama I."/>
            <person name="Baba T."/>
            <person name="Yuzawa H."/>
            <person name="Kobayashi I."/>
            <person name="Cui L."/>
            <person name="Oguchi A."/>
            <person name="Aoki K."/>
            <person name="Nagai Y."/>
            <person name="Lian J.-Q."/>
            <person name="Ito T."/>
            <person name="Kanamori M."/>
            <person name="Matsumaru H."/>
            <person name="Maruyama A."/>
            <person name="Murakami H."/>
            <person name="Hosoyama A."/>
            <person name="Mizutani-Ui Y."/>
            <person name="Takahashi N.K."/>
            <person name="Sawano T."/>
            <person name="Inoue R."/>
            <person name="Kaito C."/>
            <person name="Sekimizu K."/>
            <person name="Hirakawa H."/>
            <person name="Kuhara S."/>
            <person name="Goto S."/>
            <person name="Yabuzaki J."/>
            <person name="Kanehisa M."/>
            <person name="Yamashita A."/>
            <person name="Oshima K."/>
            <person name="Furuya K."/>
            <person name="Yoshino C."/>
            <person name="Shiba T."/>
            <person name="Hattori M."/>
            <person name="Ogasawara N."/>
            <person name="Hayashi H."/>
            <person name="Hiramatsu K."/>
        </authorList>
    </citation>
    <scope>NUCLEOTIDE SEQUENCE [LARGE SCALE GENOMIC DNA]</scope>
    <source>
        <strain>Mu50 / ATCC 700699</strain>
    </source>
</reference>
<sequence length="363" mass="40397">MTTVLFVGLGLIGGSLASNIKYHNPNTNIIAYDADTSQLDKAKSIGIINEKCLNYSEAIKKADVIIYATPVAITNKYLSELIDMPTKPGVIVSDTGSTKAMIQQHESNLLKHNIHLVSGHPMAGSHKSGVLNAKKHLFENAYYILVYNEPRNEQAANTLKELLSPTLAKFIVTTAEEHDYVTSVVSHLPHIVASSLVHVSQKNGQEHHLVNKLAAGGFRDITRIASSNAQMWKDITLSNKTYILEMIRQLKSQFQDLERLIESNDSEKLLSFFAQAKSYRDALPAKQLGGLNTAYDLYVDIPDESGMISKVTYIMSLHNISISNLRILEVREDIYGALKISFKNPTDRERGMQALSDFDCYIQ</sequence>
<name>TYRA_STAAM</name>